<sequence>MTTAVTQAIIDGFFDASNGDPFATLGMHETEQGIEIRTLLPDANRMVVIERESGKEITELDCVDERGFFVGVIPNCRQFFAYQLQVFWGNEAQIIEDPYRFHPMIDDLEQWLLSEGSMLRPYEVLGAHFMECDGVSGVNFRLWAPNARRVSIVGDFNYWDGRRHPMRFHSKSGVWELFLPKASLGQLYKFELIDCHGNLRLKADPFAFSSQLRPDTASQVSALPNVVEMTEARKKANQGNQPISIYEVHLGSWRRNLENNFWLDYDQIADELIPYVKEMGFTHIEFLPLSEFPFDGSWGYQPLGLYSPTSRFGSPEAFSRLVKRAHEAGINVILDWVPGHFPSDTHGLVAFDGTALYEHEDPREGYHQDWNTLIYNYGRNEVKNFLSSNALYWLERFGVDGIRVDAVASMIYRDYSRVEGEWIPNQYGGRENLEAIEFLKHTNWKIHSEMAGAISIAEESTSFAGVTHPSENGGLGFNFKWNMGWMNDTLAYMKLDPIYRQYHHNKMTFGMVYQYSENFVLPLSHDEVVHGKYSLLGKMPGDTWQKFANLRAYYGYMWGYPGKKLLFMGNEFAQGREWNHEESLDWFLLDENIDGGWHKGVLKLVKDLNQIYQKNRPLFELDNSPEGFDWLVVDDAANSVFAFERRSSNGERIIVVSNFTPVPRHDYRIGVNIVGEYEEILNTDSMYYQGSNVGNFGCVASENIESHGRENSISVSIPPLATVYLRLKAK</sequence>
<protein>
    <recommendedName>
        <fullName evidence="1">1,4-alpha-glucan branching enzyme GlgB</fullName>
        <ecNumber evidence="1">2.4.1.18</ecNumber>
    </recommendedName>
    <alternativeName>
        <fullName evidence="1">1,4-alpha-D-glucan:1,4-alpha-D-glucan 6-glucosyl-transferase</fullName>
    </alternativeName>
    <alternativeName>
        <fullName evidence="1">Alpha-(1-&gt;4)-glucan branching enzyme</fullName>
    </alternativeName>
    <alternativeName>
        <fullName evidence="1">Glycogen branching enzyme</fullName>
        <shortName evidence="1">BE</shortName>
    </alternativeName>
</protein>
<feature type="chain" id="PRO_1000044980" description="1,4-alpha-glucan branching enzyme GlgB">
    <location>
        <begin position="1"/>
        <end position="730"/>
    </location>
</feature>
<feature type="active site" description="Nucleophile" evidence="1">
    <location>
        <position position="405"/>
    </location>
</feature>
<feature type="active site" description="Proton donor" evidence="1">
    <location>
        <position position="458"/>
    </location>
</feature>
<gene>
    <name evidence="1" type="primary">glgB</name>
    <name type="ordered locus">CGSHiGG_00440</name>
</gene>
<organism>
    <name type="scientific">Haemophilus influenzae (strain PittGG)</name>
    <dbReference type="NCBI Taxonomy" id="374931"/>
    <lineage>
        <taxon>Bacteria</taxon>
        <taxon>Pseudomonadati</taxon>
        <taxon>Pseudomonadota</taxon>
        <taxon>Gammaproteobacteria</taxon>
        <taxon>Pasteurellales</taxon>
        <taxon>Pasteurellaceae</taxon>
        <taxon>Haemophilus</taxon>
    </lineage>
</organism>
<proteinExistence type="inferred from homology"/>
<accession>A5UEJ2</accession>
<comment type="function">
    <text evidence="1">Catalyzes the formation of the alpha-1,6-glucosidic linkages in glycogen by scission of a 1,4-alpha-linked oligosaccharide from growing alpha-1,4-glucan chains and the subsequent attachment of the oligosaccharide to the alpha-1,6 position.</text>
</comment>
<comment type="catalytic activity">
    <reaction evidence="1">
        <text>Transfers a segment of a (1-&gt;4)-alpha-D-glucan chain to a primary hydroxy group in a similar glucan chain.</text>
        <dbReference type="EC" id="2.4.1.18"/>
    </reaction>
</comment>
<comment type="pathway">
    <text evidence="1">Glycan biosynthesis; glycogen biosynthesis.</text>
</comment>
<comment type="subunit">
    <text evidence="1">Monomer.</text>
</comment>
<comment type="similarity">
    <text evidence="1">Belongs to the glycosyl hydrolase 13 family. GlgB subfamily.</text>
</comment>
<dbReference type="EC" id="2.4.1.18" evidence="1"/>
<dbReference type="EMBL" id="CP000672">
    <property type="protein sequence ID" value="ABQ99197.1"/>
    <property type="molecule type" value="Genomic_DNA"/>
</dbReference>
<dbReference type="SMR" id="A5UEJ2"/>
<dbReference type="CAZy" id="CBM48">
    <property type="family name" value="Carbohydrate-Binding Module Family 48"/>
</dbReference>
<dbReference type="CAZy" id="GH13">
    <property type="family name" value="Glycoside Hydrolase Family 13"/>
</dbReference>
<dbReference type="KEGG" id="hiq:CGSHiGG_00440"/>
<dbReference type="HOGENOM" id="CLU_004245_3_2_6"/>
<dbReference type="UniPathway" id="UPA00164"/>
<dbReference type="Proteomes" id="UP000001990">
    <property type="component" value="Chromosome"/>
</dbReference>
<dbReference type="GO" id="GO:0005829">
    <property type="term" value="C:cytosol"/>
    <property type="evidence" value="ECO:0007669"/>
    <property type="project" value="TreeGrafter"/>
</dbReference>
<dbReference type="GO" id="GO:0003844">
    <property type="term" value="F:1,4-alpha-glucan branching enzyme activity"/>
    <property type="evidence" value="ECO:0007669"/>
    <property type="project" value="UniProtKB-UniRule"/>
</dbReference>
<dbReference type="GO" id="GO:0043169">
    <property type="term" value="F:cation binding"/>
    <property type="evidence" value="ECO:0007669"/>
    <property type="project" value="InterPro"/>
</dbReference>
<dbReference type="GO" id="GO:0004553">
    <property type="term" value="F:hydrolase activity, hydrolyzing O-glycosyl compounds"/>
    <property type="evidence" value="ECO:0007669"/>
    <property type="project" value="InterPro"/>
</dbReference>
<dbReference type="GO" id="GO:0005978">
    <property type="term" value="P:glycogen biosynthetic process"/>
    <property type="evidence" value="ECO:0007669"/>
    <property type="project" value="UniProtKB-UniRule"/>
</dbReference>
<dbReference type="CDD" id="cd11322">
    <property type="entry name" value="AmyAc_Glg_BE"/>
    <property type="match status" value="1"/>
</dbReference>
<dbReference type="CDD" id="cd02855">
    <property type="entry name" value="E_set_GBE_prok_N"/>
    <property type="match status" value="1"/>
</dbReference>
<dbReference type="FunFam" id="2.60.40.10:FF:000169">
    <property type="entry name" value="1,4-alpha-glucan branching enzyme GlgB"/>
    <property type="match status" value="1"/>
</dbReference>
<dbReference type="FunFam" id="2.60.40.1180:FF:000002">
    <property type="entry name" value="1,4-alpha-glucan branching enzyme GlgB"/>
    <property type="match status" value="1"/>
</dbReference>
<dbReference type="FunFam" id="3.20.20.80:FF:000003">
    <property type="entry name" value="1,4-alpha-glucan branching enzyme GlgB"/>
    <property type="match status" value="1"/>
</dbReference>
<dbReference type="Gene3D" id="3.20.20.80">
    <property type="entry name" value="Glycosidases"/>
    <property type="match status" value="1"/>
</dbReference>
<dbReference type="Gene3D" id="2.60.40.1180">
    <property type="entry name" value="Golgi alpha-mannosidase II"/>
    <property type="match status" value="1"/>
</dbReference>
<dbReference type="Gene3D" id="2.60.40.10">
    <property type="entry name" value="Immunoglobulins"/>
    <property type="match status" value="1"/>
</dbReference>
<dbReference type="HAMAP" id="MF_00685">
    <property type="entry name" value="GlgB"/>
    <property type="match status" value="1"/>
</dbReference>
<dbReference type="InterPro" id="IPR006048">
    <property type="entry name" value="A-amylase/branching_C"/>
</dbReference>
<dbReference type="InterPro" id="IPR037439">
    <property type="entry name" value="Branching_enzy"/>
</dbReference>
<dbReference type="InterPro" id="IPR006407">
    <property type="entry name" value="GlgB"/>
</dbReference>
<dbReference type="InterPro" id="IPR054169">
    <property type="entry name" value="GlgB_N"/>
</dbReference>
<dbReference type="InterPro" id="IPR044143">
    <property type="entry name" value="GlgB_N_E_set_prok"/>
</dbReference>
<dbReference type="InterPro" id="IPR006047">
    <property type="entry name" value="Glyco_hydro_13_cat_dom"/>
</dbReference>
<dbReference type="InterPro" id="IPR004193">
    <property type="entry name" value="Glyco_hydro_13_N"/>
</dbReference>
<dbReference type="InterPro" id="IPR013780">
    <property type="entry name" value="Glyco_hydro_b"/>
</dbReference>
<dbReference type="InterPro" id="IPR017853">
    <property type="entry name" value="Glycoside_hydrolase_SF"/>
</dbReference>
<dbReference type="InterPro" id="IPR013783">
    <property type="entry name" value="Ig-like_fold"/>
</dbReference>
<dbReference type="InterPro" id="IPR014756">
    <property type="entry name" value="Ig_E-set"/>
</dbReference>
<dbReference type="NCBIfam" id="TIGR01515">
    <property type="entry name" value="branching_enzym"/>
    <property type="match status" value="1"/>
</dbReference>
<dbReference type="NCBIfam" id="NF003811">
    <property type="entry name" value="PRK05402.1"/>
    <property type="match status" value="1"/>
</dbReference>
<dbReference type="NCBIfam" id="NF008967">
    <property type="entry name" value="PRK12313.1"/>
    <property type="match status" value="1"/>
</dbReference>
<dbReference type="PANTHER" id="PTHR43651">
    <property type="entry name" value="1,4-ALPHA-GLUCAN-BRANCHING ENZYME"/>
    <property type="match status" value="1"/>
</dbReference>
<dbReference type="PANTHER" id="PTHR43651:SF3">
    <property type="entry name" value="1,4-ALPHA-GLUCAN-BRANCHING ENZYME"/>
    <property type="match status" value="1"/>
</dbReference>
<dbReference type="Pfam" id="PF00128">
    <property type="entry name" value="Alpha-amylase"/>
    <property type="match status" value="1"/>
</dbReference>
<dbReference type="Pfam" id="PF02806">
    <property type="entry name" value="Alpha-amylase_C"/>
    <property type="match status" value="1"/>
</dbReference>
<dbReference type="Pfam" id="PF02922">
    <property type="entry name" value="CBM_48"/>
    <property type="match status" value="1"/>
</dbReference>
<dbReference type="Pfam" id="PF22019">
    <property type="entry name" value="GlgB_N"/>
    <property type="match status" value="1"/>
</dbReference>
<dbReference type="PIRSF" id="PIRSF000463">
    <property type="entry name" value="GlgB"/>
    <property type="match status" value="1"/>
</dbReference>
<dbReference type="SMART" id="SM00642">
    <property type="entry name" value="Aamy"/>
    <property type="match status" value="1"/>
</dbReference>
<dbReference type="SUPFAM" id="SSF51445">
    <property type="entry name" value="(Trans)glycosidases"/>
    <property type="match status" value="1"/>
</dbReference>
<dbReference type="SUPFAM" id="SSF81296">
    <property type="entry name" value="E set domains"/>
    <property type="match status" value="2"/>
</dbReference>
<dbReference type="SUPFAM" id="SSF51011">
    <property type="entry name" value="Glycosyl hydrolase domain"/>
    <property type="match status" value="1"/>
</dbReference>
<name>GLGB_HAEIG</name>
<keyword id="KW-0119">Carbohydrate metabolism</keyword>
<keyword id="KW-0320">Glycogen biosynthesis</keyword>
<keyword id="KW-0321">Glycogen metabolism</keyword>
<keyword id="KW-0328">Glycosyltransferase</keyword>
<keyword id="KW-0808">Transferase</keyword>
<reference key="1">
    <citation type="journal article" date="2007" name="Genome Biol.">
        <title>Characterization and modeling of the Haemophilus influenzae core and supragenomes based on the complete genomic sequences of Rd and 12 clinical nontypeable strains.</title>
        <authorList>
            <person name="Hogg J.S."/>
            <person name="Hu F.Z."/>
            <person name="Janto B."/>
            <person name="Boissy R."/>
            <person name="Hayes J."/>
            <person name="Keefe R."/>
            <person name="Post J.C."/>
            <person name="Ehrlich G.D."/>
        </authorList>
    </citation>
    <scope>NUCLEOTIDE SEQUENCE [LARGE SCALE GENOMIC DNA]</scope>
    <source>
        <strain>PittGG</strain>
    </source>
</reference>
<evidence type="ECO:0000255" key="1">
    <source>
        <dbReference type="HAMAP-Rule" id="MF_00685"/>
    </source>
</evidence>